<evidence type="ECO:0000255" key="1">
    <source>
        <dbReference type="HAMAP-Rule" id="MF_01152"/>
    </source>
</evidence>
<proteinExistence type="inferred from homology"/>
<feature type="chain" id="PRO_1000085272" description="Chaperone protein DnaJ">
    <location>
        <begin position="1"/>
        <end position="376"/>
    </location>
</feature>
<feature type="domain" description="J" evidence="1">
    <location>
        <begin position="4"/>
        <end position="70"/>
    </location>
</feature>
<feature type="repeat" description="CXXCXGXG motif">
    <location>
        <begin position="152"/>
        <end position="159"/>
    </location>
</feature>
<feature type="repeat" description="CXXCXGXG motif">
    <location>
        <begin position="169"/>
        <end position="176"/>
    </location>
</feature>
<feature type="repeat" description="CXXCXGXG motif">
    <location>
        <begin position="191"/>
        <end position="198"/>
    </location>
</feature>
<feature type="repeat" description="CXXCXGXG motif">
    <location>
        <begin position="205"/>
        <end position="212"/>
    </location>
</feature>
<feature type="zinc finger region" description="CR-type" evidence="1">
    <location>
        <begin position="139"/>
        <end position="217"/>
    </location>
</feature>
<feature type="binding site" evidence="1">
    <location>
        <position position="152"/>
    </location>
    <ligand>
        <name>Zn(2+)</name>
        <dbReference type="ChEBI" id="CHEBI:29105"/>
        <label>1</label>
    </ligand>
</feature>
<feature type="binding site" evidence="1">
    <location>
        <position position="155"/>
    </location>
    <ligand>
        <name>Zn(2+)</name>
        <dbReference type="ChEBI" id="CHEBI:29105"/>
        <label>1</label>
    </ligand>
</feature>
<feature type="binding site" evidence="1">
    <location>
        <position position="169"/>
    </location>
    <ligand>
        <name>Zn(2+)</name>
        <dbReference type="ChEBI" id="CHEBI:29105"/>
        <label>2</label>
    </ligand>
</feature>
<feature type="binding site" evidence="1">
    <location>
        <position position="172"/>
    </location>
    <ligand>
        <name>Zn(2+)</name>
        <dbReference type="ChEBI" id="CHEBI:29105"/>
        <label>2</label>
    </ligand>
</feature>
<feature type="binding site" evidence="1">
    <location>
        <position position="191"/>
    </location>
    <ligand>
        <name>Zn(2+)</name>
        <dbReference type="ChEBI" id="CHEBI:29105"/>
        <label>2</label>
    </ligand>
</feature>
<feature type="binding site" evidence="1">
    <location>
        <position position="194"/>
    </location>
    <ligand>
        <name>Zn(2+)</name>
        <dbReference type="ChEBI" id="CHEBI:29105"/>
        <label>2</label>
    </ligand>
</feature>
<feature type="binding site" evidence="1">
    <location>
        <position position="205"/>
    </location>
    <ligand>
        <name>Zn(2+)</name>
        <dbReference type="ChEBI" id="CHEBI:29105"/>
        <label>1</label>
    </ligand>
</feature>
<feature type="binding site" evidence="1">
    <location>
        <position position="208"/>
    </location>
    <ligand>
        <name>Zn(2+)</name>
        <dbReference type="ChEBI" id="CHEBI:29105"/>
        <label>1</label>
    </ligand>
</feature>
<dbReference type="EMBL" id="CP000849">
    <property type="protein sequence ID" value="ABV78738.1"/>
    <property type="molecule type" value="Genomic_DNA"/>
</dbReference>
<dbReference type="RefSeq" id="WP_012151649.1">
    <property type="nucleotide sequence ID" value="NC_009883.1"/>
</dbReference>
<dbReference type="SMR" id="A8GV67"/>
<dbReference type="KEGG" id="rbo:A1I_01750"/>
<dbReference type="HOGENOM" id="CLU_017633_0_7_5"/>
<dbReference type="GO" id="GO:0005737">
    <property type="term" value="C:cytoplasm"/>
    <property type="evidence" value="ECO:0007669"/>
    <property type="project" value="UniProtKB-SubCell"/>
</dbReference>
<dbReference type="GO" id="GO:0005524">
    <property type="term" value="F:ATP binding"/>
    <property type="evidence" value="ECO:0007669"/>
    <property type="project" value="InterPro"/>
</dbReference>
<dbReference type="GO" id="GO:0031072">
    <property type="term" value="F:heat shock protein binding"/>
    <property type="evidence" value="ECO:0007669"/>
    <property type="project" value="InterPro"/>
</dbReference>
<dbReference type="GO" id="GO:0051082">
    <property type="term" value="F:unfolded protein binding"/>
    <property type="evidence" value="ECO:0007669"/>
    <property type="project" value="UniProtKB-UniRule"/>
</dbReference>
<dbReference type="GO" id="GO:0008270">
    <property type="term" value="F:zinc ion binding"/>
    <property type="evidence" value="ECO:0007669"/>
    <property type="project" value="UniProtKB-UniRule"/>
</dbReference>
<dbReference type="GO" id="GO:0051085">
    <property type="term" value="P:chaperone cofactor-dependent protein refolding"/>
    <property type="evidence" value="ECO:0007669"/>
    <property type="project" value="TreeGrafter"/>
</dbReference>
<dbReference type="GO" id="GO:0006260">
    <property type="term" value="P:DNA replication"/>
    <property type="evidence" value="ECO:0007669"/>
    <property type="project" value="UniProtKB-KW"/>
</dbReference>
<dbReference type="GO" id="GO:0042026">
    <property type="term" value="P:protein refolding"/>
    <property type="evidence" value="ECO:0007669"/>
    <property type="project" value="TreeGrafter"/>
</dbReference>
<dbReference type="GO" id="GO:0009408">
    <property type="term" value="P:response to heat"/>
    <property type="evidence" value="ECO:0007669"/>
    <property type="project" value="InterPro"/>
</dbReference>
<dbReference type="CDD" id="cd06257">
    <property type="entry name" value="DnaJ"/>
    <property type="match status" value="1"/>
</dbReference>
<dbReference type="CDD" id="cd10747">
    <property type="entry name" value="DnaJ_C"/>
    <property type="match status" value="1"/>
</dbReference>
<dbReference type="FunFam" id="1.10.287.110:FF:000153">
    <property type="entry name" value="Chaperone protein DnaJ"/>
    <property type="match status" value="1"/>
</dbReference>
<dbReference type="FunFam" id="2.10.230.10:FF:000002">
    <property type="entry name" value="Molecular chaperone DnaJ"/>
    <property type="match status" value="1"/>
</dbReference>
<dbReference type="FunFam" id="2.60.260.20:FF:000004">
    <property type="entry name" value="Molecular chaperone DnaJ"/>
    <property type="match status" value="1"/>
</dbReference>
<dbReference type="Gene3D" id="1.10.287.110">
    <property type="entry name" value="DnaJ domain"/>
    <property type="match status" value="1"/>
</dbReference>
<dbReference type="Gene3D" id="2.10.230.10">
    <property type="entry name" value="Heat shock protein DnaJ, cysteine-rich domain"/>
    <property type="match status" value="1"/>
</dbReference>
<dbReference type="Gene3D" id="2.60.260.20">
    <property type="entry name" value="Urease metallochaperone UreE, N-terminal domain"/>
    <property type="match status" value="2"/>
</dbReference>
<dbReference type="HAMAP" id="MF_01152">
    <property type="entry name" value="DnaJ"/>
    <property type="match status" value="1"/>
</dbReference>
<dbReference type="InterPro" id="IPR012724">
    <property type="entry name" value="DnaJ"/>
</dbReference>
<dbReference type="InterPro" id="IPR002939">
    <property type="entry name" value="DnaJ_C"/>
</dbReference>
<dbReference type="InterPro" id="IPR001623">
    <property type="entry name" value="DnaJ_domain"/>
</dbReference>
<dbReference type="InterPro" id="IPR018253">
    <property type="entry name" value="DnaJ_domain_CS"/>
</dbReference>
<dbReference type="InterPro" id="IPR008971">
    <property type="entry name" value="HSP40/DnaJ_pept-bd"/>
</dbReference>
<dbReference type="InterPro" id="IPR001305">
    <property type="entry name" value="HSP_DnaJ_Cys-rich_dom"/>
</dbReference>
<dbReference type="InterPro" id="IPR036410">
    <property type="entry name" value="HSP_DnaJ_Cys-rich_dom_sf"/>
</dbReference>
<dbReference type="InterPro" id="IPR036869">
    <property type="entry name" value="J_dom_sf"/>
</dbReference>
<dbReference type="NCBIfam" id="TIGR02349">
    <property type="entry name" value="DnaJ_bact"/>
    <property type="match status" value="1"/>
</dbReference>
<dbReference type="NCBIfam" id="NF008035">
    <property type="entry name" value="PRK10767.1"/>
    <property type="match status" value="1"/>
</dbReference>
<dbReference type="NCBIfam" id="NF010893">
    <property type="entry name" value="PRK14300.1"/>
    <property type="match status" value="1"/>
</dbReference>
<dbReference type="PANTHER" id="PTHR43096">
    <property type="entry name" value="DNAJ HOMOLOG 1, MITOCHONDRIAL-RELATED"/>
    <property type="match status" value="1"/>
</dbReference>
<dbReference type="PANTHER" id="PTHR43096:SF52">
    <property type="entry name" value="DNAJ HOMOLOG 1, MITOCHONDRIAL-RELATED"/>
    <property type="match status" value="1"/>
</dbReference>
<dbReference type="Pfam" id="PF00226">
    <property type="entry name" value="DnaJ"/>
    <property type="match status" value="1"/>
</dbReference>
<dbReference type="Pfam" id="PF01556">
    <property type="entry name" value="DnaJ_C"/>
    <property type="match status" value="1"/>
</dbReference>
<dbReference type="Pfam" id="PF00684">
    <property type="entry name" value="DnaJ_CXXCXGXG"/>
    <property type="match status" value="1"/>
</dbReference>
<dbReference type="PRINTS" id="PR00625">
    <property type="entry name" value="JDOMAIN"/>
</dbReference>
<dbReference type="SMART" id="SM00271">
    <property type="entry name" value="DnaJ"/>
    <property type="match status" value="1"/>
</dbReference>
<dbReference type="SUPFAM" id="SSF46565">
    <property type="entry name" value="Chaperone J-domain"/>
    <property type="match status" value="1"/>
</dbReference>
<dbReference type="SUPFAM" id="SSF57938">
    <property type="entry name" value="DnaJ/Hsp40 cysteine-rich domain"/>
    <property type="match status" value="1"/>
</dbReference>
<dbReference type="SUPFAM" id="SSF49493">
    <property type="entry name" value="HSP40/DnaJ peptide-binding domain"/>
    <property type="match status" value="2"/>
</dbReference>
<dbReference type="PROSITE" id="PS00636">
    <property type="entry name" value="DNAJ_1"/>
    <property type="match status" value="1"/>
</dbReference>
<dbReference type="PROSITE" id="PS50076">
    <property type="entry name" value="DNAJ_2"/>
    <property type="match status" value="1"/>
</dbReference>
<dbReference type="PROSITE" id="PS51188">
    <property type="entry name" value="ZF_CR"/>
    <property type="match status" value="1"/>
</dbReference>
<protein>
    <recommendedName>
        <fullName evidence="1">Chaperone protein DnaJ</fullName>
    </recommendedName>
</protein>
<comment type="function">
    <text evidence="1">Participates actively in the response to hyperosmotic and heat shock by preventing the aggregation of stress-denatured proteins and by disaggregating proteins, also in an autonomous, DnaK-independent fashion. Unfolded proteins bind initially to DnaJ; upon interaction with the DnaJ-bound protein, DnaK hydrolyzes its bound ATP, resulting in the formation of a stable complex. GrpE releases ADP from DnaK; ATP binding to DnaK triggers the release of the substrate protein, thus completing the reaction cycle. Several rounds of ATP-dependent interactions between DnaJ, DnaK and GrpE are required for fully efficient folding. Also involved, together with DnaK and GrpE, in the DNA replication of plasmids through activation of initiation proteins.</text>
</comment>
<comment type="cofactor">
    <cofactor evidence="1">
        <name>Zn(2+)</name>
        <dbReference type="ChEBI" id="CHEBI:29105"/>
    </cofactor>
    <text evidence="1">Binds 2 Zn(2+) ions per monomer.</text>
</comment>
<comment type="subunit">
    <text evidence="1">Homodimer.</text>
</comment>
<comment type="subcellular location">
    <subcellularLocation>
        <location evidence="1">Cytoplasm</location>
    </subcellularLocation>
</comment>
<comment type="domain">
    <text evidence="1">The J domain is necessary and sufficient to stimulate DnaK ATPase activity. Zinc center 1 plays an important role in the autonomous, DnaK-independent chaperone activity of DnaJ. Zinc center 2 is essential for interaction with DnaK and for DnaJ activity.</text>
</comment>
<comment type="similarity">
    <text evidence="1">Belongs to the DnaJ family.</text>
</comment>
<keyword id="KW-0143">Chaperone</keyword>
<keyword id="KW-0963">Cytoplasm</keyword>
<keyword id="KW-0235">DNA replication</keyword>
<keyword id="KW-0479">Metal-binding</keyword>
<keyword id="KW-0677">Repeat</keyword>
<keyword id="KW-0346">Stress response</keyword>
<keyword id="KW-0862">Zinc</keyword>
<keyword id="KW-0863">Zinc-finger</keyword>
<gene>
    <name evidence="1" type="primary">dnaJ</name>
    <name type="ordered locus">A1I_01750</name>
</gene>
<sequence>MSQDYYQILGVSKTANSADLKKAYHKLAKQYHPDNAAAGDTNAEKKFKEINAAYEVLKDEQKRAAYDRFGHDAFQNQQARGGAGSQGGHPFGADINDIFGDFFSDFMGGGGRRKPTSSKVRGSDLKYNLTINLEEAFHGVEKNISFSSEVKCDTCHGSGSEKGETTTTCDACGGVGATRVQQGFFMIEQTCHKCQGNGQIIKNPCKKCHGLGRYHKQRNLSVNIPAGVENGTRIRHPGEGEAGIRGGNNGDLYVDIAIKPHDIYKVDGANLHCKLPISFVNAALGGEVAVPVIEGGKVNLTIPAGTQNGDQLRLCGKGMSKIRSTIRGDMLAHVHVEVPKNLSKRQRELLEELRGESANEKENDGSFFNKMKSLWS</sequence>
<accession>A8GV67</accession>
<organism>
    <name type="scientific">Rickettsia bellii (strain OSU 85-389)</name>
    <dbReference type="NCBI Taxonomy" id="391896"/>
    <lineage>
        <taxon>Bacteria</taxon>
        <taxon>Pseudomonadati</taxon>
        <taxon>Pseudomonadota</taxon>
        <taxon>Alphaproteobacteria</taxon>
        <taxon>Rickettsiales</taxon>
        <taxon>Rickettsiaceae</taxon>
        <taxon>Rickettsieae</taxon>
        <taxon>Rickettsia</taxon>
        <taxon>belli group</taxon>
    </lineage>
</organism>
<reference key="1">
    <citation type="submission" date="2007-09" db="EMBL/GenBank/DDBJ databases">
        <title>Complete genome sequencing of Rickettsia bellii.</title>
        <authorList>
            <person name="Madan A."/>
            <person name="Lee H."/>
            <person name="Madan A."/>
            <person name="Yoon J.-G."/>
            <person name="Ryu G.-Y."/>
            <person name="Dasch G."/>
            <person name="Ereemeva M."/>
        </authorList>
    </citation>
    <scope>NUCLEOTIDE SEQUENCE [LARGE SCALE GENOMIC DNA]</scope>
    <source>
        <strain>OSU 85-389</strain>
    </source>
</reference>
<name>DNAJ_RICB8</name>